<evidence type="ECO:0000255" key="1">
    <source>
        <dbReference type="HAMAP-Rule" id="MF_00151"/>
    </source>
</evidence>
<accession>Q0TPM5</accession>
<reference key="1">
    <citation type="journal article" date="2006" name="Genome Res.">
        <title>Skewed genomic variability in strains of the toxigenic bacterial pathogen, Clostridium perfringens.</title>
        <authorList>
            <person name="Myers G.S.A."/>
            <person name="Rasko D.A."/>
            <person name="Cheung J.K."/>
            <person name="Ravel J."/>
            <person name="Seshadri R."/>
            <person name="DeBoy R.T."/>
            <person name="Ren Q."/>
            <person name="Varga J."/>
            <person name="Awad M.M."/>
            <person name="Brinkac L.M."/>
            <person name="Daugherty S.C."/>
            <person name="Haft D.H."/>
            <person name="Dodson R.J."/>
            <person name="Madupu R."/>
            <person name="Nelson W.C."/>
            <person name="Rosovitz M.J."/>
            <person name="Sullivan S.A."/>
            <person name="Khouri H."/>
            <person name="Dimitrov G.I."/>
            <person name="Watkins K.L."/>
            <person name="Mulligan S."/>
            <person name="Benton J."/>
            <person name="Radune D."/>
            <person name="Fisher D.J."/>
            <person name="Atkins H.S."/>
            <person name="Hiscox T."/>
            <person name="Jost B.H."/>
            <person name="Billington S.J."/>
            <person name="Songer J.G."/>
            <person name="McClane B.A."/>
            <person name="Titball R.W."/>
            <person name="Rood J.I."/>
            <person name="Melville S.B."/>
            <person name="Paulsen I.T."/>
        </authorList>
    </citation>
    <scope>NUCLEOTIDE SEQUENCE [LARGE SCALE GENOMIC DNA]</scope>
    <source>
        <strain>ATCC 13124 / DSM 756 / JCM 1290 / NCIMB 6125 / NCTC 8237 / S 107 / Type A</strain>
    </source>
</reference>
<proteinExistence type="inferred from homology"/>
<comment type="function">
    <text evidence="1">Reversibly transfers an adenylyl group from ATP to 4'-phosphopantetheine, yielding dephospho-CoA (dPCoA) and pyrophosphate.</text>
</comment>
<comment type="catalytic activity">
    <reaction evidence="1">
        <text>(R)-4'-phosphopantetheine + ATP + H(+) = 3'-dephospho-CoA + diphosphate</text>
        <dbReference type="Rhea" id="RHEA:19801"/>
        <dbReference type="ChEBI" id="CHEBI:15378"/>
        <dbReference type="ChEBI" id="CHEBI:30616"/>
        <dbReference type="ChEBI" id="CHEBI:33019"/>
        <dbReference type="ChEBI" id="CHEBI:57328"/>
        <dbReference type="ChEBI" id="CHEBI:61723"/>
        <dbReference type="EC" id="2.7.7.3"/>
    </reaction>
</comment>
<comment type="cofactor">
    <cofactor evidence="1">
        <name>Mg(2+)</name>
        <dbReference type="ChEBI" id="CHEBI:18420"/>
    </cofactor>
</comment>
<comment type="pathway">
    <text evidence="1">Cofactor biosynthesis; coenzyme A biosynthesis; CoA from (R)-pantothenate: step 4/5.</text>
</comment>
<comment type="subunit">
    <text evidence="1">Homohexamer.</text>
</comment>
<comment type="subcellular location">
    <subcellularLocation>
        <location evidence="1">Cytoplasm</location>
    </subcellularLocation>
</comment>
<comment type="similarity">
    <text evidence="1">Belongs to the bacterial CoaD family.</text>
</comment>
<sequence length="164" mass="18562">MRVGVYPGSFDPITKGHLDLIERAASKFDKVIVAVLININKKGMFSIEERVNLIEKCVAKYNNVEVKSFNGLLIDFVRKEKADVIIKGLRSVTDFEYEFQMALMNRELANEVETVFMVTSPNYSYISSSAIKQVASFNGEIKNFVPKEIVEDLEERISSLRGEG</sequence>
<keyword id="KW-0067">ATP-binding</keyword>
<keyword id="KW-0173">Coenzyme A biosynthesis</keyword>
<keyword id="KW-0963">Cytoplasm</keyword>
<keyword id="KW-0460">Magnesium</keyword>
<keyword id="KW-0547">Nucleotide-binding</keyword>
<keyword id="KW-0548">Nucleotidyltransferase</keyword>
<keyword id="KW-0808">Transferase</keyword>
<organism>
    <name type="scientific">Clostridium perfringens (strain ATCC 13124 / DSM 756 / JCM 1290 / NCIMB 6125 / NCTC 8237 / Type A)</name>
    <dbReference type="NCBI Taxonomy" id="195103"/>
    <lineage>
        <taxon>Bacteria</taxon>
        <taxon>Bacillati</taxon>
        <taxon>Bacillota</taxon>
        <taxon>Clostridia</taxon>
        <taxon>Eubacteriales</taxon>
        <taxon>Clostridiaceae</taxon>
        <taxon>Clostridium</taxon>
    </lineage>
</organism>
<gene>
    <name evidence="1" type="primary">coaD</name>
    <name type="ordered locus">CPF_1982</name>
</gene>
<name>COAD_CLOP1</name>
<dbReference type="EC" id="2.7.7.3" evidence="1"/>
<dbReference type="EMBL" id="CP000246">
    <property type="protein sequence ID" value="ABG82204.1"/>
    <property type="molecule type" value="Genomic_DNA"/>
</dbReference>
<dbReference type="RefSeq" id="WP_011590940.1">
    <property type="nucleotide sequence ID" value="NC_008261.1"/>
</dbReference>
<dbReference type="SMR" id="Q0TPM5"/>
<dbReference type="STRING" id="195103.CPF_1982"/>
<dbReference type="PaxDb" id="195103-CPF_1982"/>
<dbReference type="KEGG" id="cpf:CPF_1982"/>
<dbReference type="eggNOG" id="COG0669">
    <property type="taxonomic scope" value="Bacteria"/>
</dbReference>
<dbReference type="HOGENOM" id="CLU_100149_1_0_9"/>
<dbReference type="UniPathway" id="UPA00241">
    <property type="reaction ID" value="UER00355"/>
</dbReference>
<dbReference type="Proteomes" id="UP000001823">
    <property type="component" value="Chromosome"/>
</dbReference>
<dbReference type="GO" id="GO:0005737">
    <property type="term" value="C:cytoplasm"/>
    <property type="evidence" value="ECO:0007669"/>
    <property type="project" value="UniProtKB-SubCell"/>
</dbReference>
<dbReference type="GO" id="GO:0005524">
    <property type="term" value="F:ATP binding"/>
    <property type="evidence" value="ECO:0007669"/>
    <property type="project" value="UniProtKB-KW"/>
</dbReference>
<dbReference type="GO" id="GO:0004595">
    <property type="term" value="F:pantetheine-phosphate adenylyltransferase activity"/>
    <property type="evidence" value="ECO:0007669"/>
    <property type="project" value="UniProtKB-UniRule"/>
</dbReference>
<dbReference type="GO" id="GO:0015937">
    <property type="term" value="P:coenzyme A biosynthetic process"/>
    <property type="evidence" value="ECO:0007669"/>
    <property type="project" value="UniProtKB-UniRule"/>
</dbReference>
<dbReference type="CDD" id="cd02163">
    <property type="entry name" value="PPAT"/>
    <property type="match status" value="1"/>
</dbReference>
<dbReference type="Gene3D" id="3.40.50.620">
    <property type="entry name" value="HUPs"/>
    <property type="match status" value="1"/>
</dbReference>
<dbReference type="HAMAP" id="MF_00151">
    <property type="entry name" value="PPAT_bact"/>
    <property type="match status" value="1"/>
</dbReference>
<dbReference type="InterPro" id="IPR004821">
    <property type="entry name" value="Cyt_trans-like"/>
</dbReference>
<dbReference type="InterPro" id="IPR001980">
    <property type="entry name" value="PPAT"/>
</dbReference>
<dbReference type="InterPro" id="IPR014729">
    <property type="entry name" value="Rossmann-like_a/b/a_fold"/>
</dbReference>
<dbReference type="NCBIfam" id="TIGR01510">
    <property type="entry name" value="coaD_prev_kdtB"/>
    <property type="match status" value="1"/>
</dbReference>
<dbReference type="NCBIfam" id="TIGR00125">
    <property type="entry name" value="cyt_tran_rel"/>
    <property type="match status" value="1"/>
</dbReference>
<dbReference type="PANTHER" id="PTHR21342">
    <property type="entry name" value="PHOSPHOPANTETHEINE ADENYLYLTRANSFERASE"/>
    <property type="match status" value="1"/>
</dbReference>
<dbReference type="PANTHER" id="PTHR21342:SF1">
    <property type="entry name" value="PHOSPHOPANTETHEINE ADENYLYLTRANSFERASE"/>
    <property type="match status" value="1"/>
</dbReference>
<dbReference type="Pfam" id="PF01467">
    <property type="entry name" value="CTP_transf_like"/>
    <property type="match status" value="1"/>
</dbReference>
<dbReference type="PRINTS" id="PR01020">
    <property type="entry name" value="LPSBIOSNTHSS"/>
</dbReference>
<dbReference type="SUPFAM" id="SSF52374">
    <property type="entry name" value="Nucleotidylyl transferase"/>
    <property type="match status" value="1"/>
</dbReference>
<protein>
    <recommendedName>
        <fullName evidence="1">Phosphopantetheine adenylyltransferase</fullName>
        <ecNumber evidence="1">2.7.7.3</ecNumber>
    </recommendedName>
    <alternativeName>
        <fullName evidence="1">Dephospho-CoA pyrophosphorylase</fullName>
    </alternativeName>
    <alternativeName>
        <fullName evidence="1">Pantetheine-phosphate adenylyltransferase</fullName>
        <shortName evidence="1">PPAT</shortName>
    </alternativeName>
</protein>
<feature type="chain" id="PRO_1000011129" description="Phosphopantetheine adenylyltransferase">
    <location>
        <begin position="1"/>
        <end position="164"/>
    </location>
</feature>
<feature type="binding site" evidence="1">
    <location>
        <begin position="9"/>
        <end position="10"/>
    </location>
    <ligand>
        <name>ATP</name>
        <dbReference type="ChEBI" id="CHEBI:30616"/>
    </ligand>
</feature>
<feature type="binding site" evidence="1">
    <location>
        <position position="9"/>
    </location>
    <ligand>
        <name>substrate</name>
    </ligand>
</feature>
<feature type="binding site" evidence="1">
    <location>
        <position position="17"/>
    </location>
    <ligand>
        <name>ATP</name>
        <dbReference type="ChEBI" id="CHEBI:30616"/>
    </ligand>
</feature>
<feature type="binding site" evidence="1">
    <location>
        <position position="41"/>
    </location>
    <ligand>
        <name>substrate</name>
    </ligand>
</feature>
<feature type="binding site" evidence="1">
    <location>
        <position position="73"/>
    </location>
    <ligand>
        <name>substrate</name>
    </ligand>
</feature>
<feature type="binding site" evidence="1">
    <location>
        <position position="87"/>
    </location>
    <ligand>
        <name>substrate</name>
    </ligand>
</feature>
<feature type="binding site" evidence="1">
    <location>
        <begin position="88"/>
        <end position="90"/>
    </location>
    <ligand>
        <name>ATP</name>
        <dbReference type="ChEBI" id="CHEBI:30616"/>
    </ligand>
</feature>
<feature type="binding site" evidence="1">
    <location>
        <position position="98"/>
    </location>
    <ligand>
        <name>ATP</name>
        <dbReference type="ChEBI" id="CHEBI:30616"/>
    </ligand>
</feature>
<feature type="binding site" evidence="1">
    <location>
        <begin position="123"/>
        <end position="129"/>
    </location>
    <ligand>
        <name>ATP</name>
        <dbReference type="ChEBI" id="CHEBI:30616"/>
    </ligand>
</feature>
<feature type="site" description="Transition state stabilizer" evidence="1">
    <location>
        <position position="17"/>
    </location>
</feature>